<accession>O13899</accession>
<accession>A0AAN2L366</accession>
<evidence type="ECO:0000250" key="1">
    <source>
        <dbReference type="UniProtKB" id="Q07560"/>
    </source>
</evidence>
<evidence type="ECO:0000255" key="2"/>
<evidence type="ECO:0000269" key="3">
    <source>
    </source>
</evidence>
<evidence type="ECO:0000269" key="4">
    <source>
    </source>
</evidence>
<evidence type="ECO:0000303" key="5">
    <source>
    </source>
</evidence>
<evidence type="ECO:0000305" key="6"/>
<evidence type="ECO:0000305" key="7">
    <source>
    </source>
</evidence>
<evidence type="ECO:0000312" key="8">
    <source>
        <dbReference type="PomBase" id="SPAC22A12.08c"/>
    </source>
</evidence>
<dbReference type="EC" id="3.-.-.-" evidence="6"/>
<dbReference type="EC" id="2.7.8.41" evidence="7"/>
<dbReference type="EMBL" id="CU329670">
    <property type="protein sequence ID" value="CAK9837451.1"/>
    <property type="molecule type" value="Genomic_DNA"/>
</dbReference>
<dbReference type="PIR" id="T38148">
    <property type="entry name" value="T38148"/>
</dbReference>
<dbReference type="SMR" id="O13899"/>
<dbReference type="FunCoup" id="O13899">
    <property type="interactions" value="282"/>
</dbReference>
<dbReference type="STRING" id="284812.O13899"/>
<dbReference type="iPTMnet" id="O13899"/>
<dbReference type="PaxDb" id="4896-SPAC22A12.08c.1"/>
<dbReference type="EnsemblFungi" id="SPAC22A12.08c.1">
    <property type="protein sequence ID" value="SPAC22A12.08c.1:pep"/>
    <property type="gene ID" value="SPAC22A12.08c"/>
</dbReference>
<dbReference type="PomBase" id="SPAC22A12.08c">
    <property type="gene designation" value="crd1"/>
</dbReference>
<dbReference type="VEuPathDB" id="FungiDB:SPAC22A12.08c"/>
<dbReference type="eggNOG" id="KOG1617">
    <property type="taxonomic scope" value="Eukaryota"/>
</dbReference>
<dbReference type="eggNOG" id="KOG1618">
    <property type="taxonomic scope" value="Eukaryota"/>
</dbReference>
<dbReference type="HOGENOM" id="CLU_458674_0_0_1"/>
<dbReference type="InParanoid" id="O13899"/>
<dbReference type="PhylomeDB" id="O13899"/>
<dbReference type="Reactome" id="R-SPO-1482925">
    <property type="pathway name" value="Acyl chain remodelling of PG"/>
</dbReference>
<dbReference type="Reactome" id="R-SPO-1483076">
    <property type="pathway name" value="Synthesis of CL"/>
</dbReference>
<dbReference type="PRO" id="PR:O13899"/>
<dbReference type="Proteomes" id="UP000002485">
    <property type="component" value="Chromosome I"/>
</dbReference>
<dbReference type="GO" id="GO:0016020">
    <property type="term" value="C:membrane"/>
    <property type="evidence" value="ECO:0007669"/>
    <property type="project" value="UniProtKB-KW"/>
</dbReference>
<dbReference type="GO" id="GO:0005743">
    <property type="term" value="C:mitochondrial inner membrane"/>
    <property type="evidence" value="ECO:0007669"/>
    <property type="project" value="UniProtKB-SubCell"/>
</dbReference>
<dbReference type="GO" id="GO:0005739">
    <property type="term" value="C:mitochondrion"/>
    <property type="evidence" value="ECO:0000314"/>
    <property type="project" value="PomBase"/>
</dbReference>
<dbReference type="GO" id="GO:0043337">
    <property type="term" value="F:cardiolipin synthase (CMP-forming)"/>
    <property type="evidence" value="ECO:0007669"/>
    <property type="project" value="UniProtKB-ARBA"/>
</dbReference>
<dbReference type="GO" id="GO:0008808">
    <property type="term" value="F:cardiolipin synthase activity"/>
    <property type="evidence" value="ECO:0000266"/>
    <property type="project" value="PomBase"/>
</dbReference>
<dbReference type="GO" id="GO:0016787">
    <property type="term" value="F:hydrolase activity"/>
    <property type="evidence" value="ECO:0007669"/>
    <property type="project" value="UniProtKB-KW"/>
</dbReference>
<dbReference type="GO" id="GO:0032049">
    <property type="term" value="P:cardiolipin biosynthetic process"/>
    <property type="evidence" value="ECO:0000315"/>
    <property type="project" value="PomBase"/>
</dbReference>
<dbReference type="GO" id="GO:0007006">
    <property type="term" value="P:mitochondrial membrane organization"/>
    <property type="evidence" value="ECO:0000266"/>
    <property type="project" value="PomBase"/>
</dbReference>
<dbReference type="GO" id="GO:0008654">
    <property type="term" value="P:phospholipid biosynthetic process"/>
    <property type="evidence" value="ECO:0007669"/>
    <property type="project" value="UniProtKB-KW"/>
</dbReference>
<dbReference type="GO" id="GO:0055091">
    <property type="term" value="P:phospholipid homeostasis"/>
    <property type="evidence" value="ECO:0000315"/>
    <property type="project" value="PomBase"/>
</dbReference>
<dbReference type="CDD" id="cd07511">
    <property type="entry name" value="HAD_like"/>
    <property type="match status" value="1"/>
</dbReference>
<dbReference type="Gene3D" id="1.20.120.1760">
    <property type="match status" value="1"/>
</dbReference>
<dbReference type="Gene3D" id="3.40.50.1000">
    <property type="entry name" value="HAD superfamily/HAD-like"/>
    <property type="match status" value="2"/>
</dbReference>
<dbReference type="InterPro" id="IPR050324">
    <property type="entry name" value="CDP-alcohol_PTase-I"/>
</dbReference>
<dbReference type="InterPro" id="IPR000462">
    <property type="entry name" value="CDP-OH_P_trans"/>
</dbReference>
<dbReference type="InterPro" id="IPR043130">
    <property type="entry name" value="CDP-OH_PTrfase_TM_dom"/>
</dbReference>
<dbReference type="InterPro" id="IPR048254">
    <property type="entry name" value="CDP_ALCOHOL_P_TRANSF_CS"/>
</dbReference>
<dbReference type="InterPro" id="IPR036412">
    <property type="entry name" value="HAD-like_sf"/>
</dbReference>
<dbReference type="InterPro" id="IPR006357">
    <property type="entry name" value="HAD-SF_hydro_IIA"/>
</dbReference>
<dbReference type="InterPro" id="IPR006353">
    <property type="entry name" value="HAD-SF_hydro_IIA_CECR5"/>
</dbReference>
<dbReference type="InterPro" id="IPR023214">
    <property type="entry name" value="HAD_sf"/>
</dbReference>
<dbReference type="NCBIfam" id="TIGR01456">
    <property type="entry name" value="CECR5"/>
    <property type="match status" value="1"/>
</dbReference>
<dbReference type="NCBIfam" id="TIGR01460">
    <property type="entry name" value="HAD-SF-IIA"/>
    <property type="match status" value="1"/>
</dbReference>
<dbReference type="PANTHER" id="PTHR14269:SF60">
    <property type="entry name" value="CARDIOLIPIN SYNTHASE (CMP-FORMING)"/>
    <property type="match status" value="1"/>
</dbReference>
<dbReference type="PANTHER" id="PTHR14269">
    <property type="entry name" value="CDP-DIACYLGLYCEROL--GLYCEROL-3-PHOSPHATE 3-PHOSPHATIDYLTRANSFERASE-RELATED"/>
    <property type="match status" value="1"/>
</dbReference>
<dbReference type="Pfam" id="PF01066">
    <property type="entry name" value="CDP-OH_P_transf"/>
    <property type="match status" value="1"/>
</dbReference>
<dbReference type="Pfam" id="PF13344">
    <property type="entry name" value="Hydrolase_6"/>
    <property type="match status" value="1"/>
</dbReference>
<dbReference type="Pfam" id="PF13242">
    <property type="entry name" value="Hydrolase_like"/>
    <property type="match status" value="1"/>
</dbReference>
<dbReference type="SUPFAM" id="SSF56784">
    <property type="entry name" value="HAD-like"/>
    <property type="match status" value="1"/>
</dbReference>
<dbReference type="PROSITE" id="PS00379">
    <property type="entry name" value="CDP_ALCOHOL_P_TRANSF"/>
    <property type="match status" value="1"/>
</dbReference>
<comment type="function">
    <molecule>Cardiolipin synthase (CMP-forming)</molecule>
    <text evidence="4">Catalyzes the synthesis of cardiolipin (CL) (diphosphatidylglycerol) by specifically transferring a phosphatidyl group from CDP-diacylglycerol to phosphatidylglycerol (PG) (PubMed:29958934). CL is a key phospholipid in mitochondrial membranes and plays important roles in maintaining the functional integrity and dynamics of mitochondria under both optimal and stress conditions (PubMed:29958934).</text>
</comment>
<comment type="function">
    <molecule>Mitochondrial hydrolase</molecule>
    <text evidence="4">Activity is dispensable for viability.</text>
</comment>
<comment type="catalytic activity">
    <molecule>Mitochondrial hydrolase</molecule>
    <reaction evidence="7">
        <text>a CDP-1,2-diacyl-sn-glycerol + a 1,2-diacyl-sn-glycero-3-phospho-(1'-sn-glycerol) = a cardiolipin + CMP + H(+)</text>
        <dbReference type="Rhea" id="RHEA:32931"/>
        <dbReference type="ChEBI" id="CHEBI:15378"/>
        <dbReference type="ChEBI" id="CHEBI:58332"/>
        <dbReference type="ChEBI" id="CHEBI:60377"/>
        <dbReference type="ChEBI" id="CHEBI:62237"/>
        <dbReference type="ChEBI" id="CHEBI:64716"/>
        <dbReference type="EC" id="2.7.8.41"/>
    </reaction>
</comment>
<comment type="cofactor">
    <cofactor evidence="1">
        <name>Mg(2+)</name>
        <dbReference type="ChEBI" id="CHEBI:18420"/>
    </cofactor>
</comment>
<comment type="subcellular location">
    <subcellularLocation>
        <location evidence="3">Mitochondrion</location>
    </subcellularLocation>
</comment>
<comment type="subcellular location">
    <molecule>Cardiolipin synthase (CMP-forming)</molecule>
    <subcellularLocation>
        <location evidence="7">Mitochondrion inner membrane</location>
        <topology evidence="2">Multi-pass membrane protein</topology>
    </subcellularLocation>
</comment>
<comment type="subcellular location">
    <molecule>Mitochondrial hydrolase</molecule>
    <subcellularLocation>
        <location evidence="4">Mitochondrion</location>
    </subcellularLocation>
</comment>
<comment type="alternative products">
    <event type="alternative splicing"/>
    <isoform>
        <id>O13899-1</id>
        <name evidence="4">1</name>
        <sequence type="displayed"/>
    </isoform>
    <isoform>
        <id>O13899-2</id>
        <name evidence="4">2</name>
        <sequence type="described" ref="VSP_061962"/>
    </isoform>
</comment>
<comment type="induction">
    <molecule>Isoform 1</molecule>
    <text evidence="4">Minor isoform expressed during exponential growth.</text>
</comment>
<comment type="induction">
    <molecule>Isoform 2</molecule>
    <text evidence="4">Major isoform expressed during exponential growth.</text>
</comment>
<comment type="PTM">
    <molecule>Isoform 1</molecule>
    <text evidence="4">Proteolytically cleaved, presumably during its import into the mitochondrion by mitochondrial processing peptidase.</text>
</comment>
<comment type="similarity">
    <text evidence="6">In the N-terminal section; belongs to the HAD-like hydrolase superfamily.</text>
</comment>
<comment type="similarity">
    <text evidence="6">In the C-terminal section; belongs to the CDP-alcohol phosphatidyltransferase class-I family.</text>
</comment>
<proteinExistence type="evidence at protein level"/>
<organism>
    <name type="scientific">Schizosaccharomyces pombe (strain 972 / ATCC 24843)</name>
    <name type="common">Fission yeast</name>
    <dbReference type="NCBI Taxonomy" id="284812"/>
    <lineage>
        <taxon>Eukaryota</taxon>
        <taxon>Fungi</taxon>
        <taxon>Dikarya</taxon>
        <taxon>Ascomycota</taxon>
        <taxon>Taphrinomycotina</taxon>
        <taxon>Schizosaccharomycetes</taxon>
        <taxon>Schizosaccharomycetales</taxon>
        <taxon>Schizosaccharomycetaceae</taxon>
        <taxon>Schizosaccharomyces</taxon>
    </lineage>
</organism>
<gene>
    <name evidence="8" type="primary">crd1</name>
    <name evidence="8" type="ORF">SPAC22A12.08c</name>
</gene>
<feature type="transit peptide" description="Mitochondrion" evidence="2">
    <location>
        <begin position="1"/>
        <end position="24"/>
    </location>
</feature>
<feature type="chain" id="PRO_0000318105" description="Cardiolipin synthase (CMP-forming) / mitochondrial hydrolase fusion protein" evidence="2">
    <location>
        <begin position="25"/>
        <end position="595"/>
    </location>
</feature>
<feature type="chain" id="PRO_0000458745" description="Mitochondrial hydrolase" evidence="4">
    <location>
        <begin position="25"/>
        <end status="unknown"/>
    </location>
</feature>
<feature type="chain" id="PRO_0000458746" description="Cardiolipin synthase (CMP-forming)" evidence="4">
    <location>
        <begin status="unknown"/>
        <end position="595"/>
    </location>
</feature>
<feature type="transmembrane region" description="Helical" evidence="2">
    <location>
        <begin position="538"/>
        <end position="560"/>
    </location>
</feature>
<feature type="transmembrane region" description="Helical" evidence="2">
    <location>
        <begin position="564"/>
        <end position="586"/>
    </location>
</feature>
<feature type="splice variant" id="VSP_061962" description="In isoform 2." evidence="4">
    <original>NNSKPIQRPLRENIFTLPNLLTFSRLLSAPLIAYLYIYDYTKAAACFFLYAGFTDLVDGYIARKFDLGSIAGTVLDPLADKTLMTCLTICLAVRETMPLTLASLIIGRDVLLVSAVSYLRYKSLPAPKTFRRFFDFAIPTTELKPTRISKWNTALQLLLLGLLITEPILPFDASFAKSPLFYIVGCTTIASGASYCISRNTFRNIGKSKLQ</original>
    <variation>SFQLH</variation>
    <location>
        <begin position="385"/>
        <end position="595"/>
    </location>
</feature>
<feature type="mutagenesis site" description="Disrupts propeptide processing." evidence="4">
    <location>
        <begin position="369"/>
        <end position="372"/>
    </location>
</feature>
<protein>
    <recommendedName>
        <fullName evidence="6">Cardiolipin synthase (CMP-forming) / mitochondrial hydrolase fusion protein</fullName>
    </recommendedName>
    <component>
        <recommendedName>
            <fullName evidence="5">Mitochondrial hydrolase</fullName>
            <ecNumber evidence="6">3.-.-.-</ecNumber>
        </recommendedName>
    </component>
    <component>
        <recommendedName>
            <fullName evidence="5">Cardiolipin synthase (CMP-forming)</fullName>
            <shortName evidence="6">CLS</shortName>
            <ecNumber evidence="7">2.7.8.41</ecNumber>
        </recommendedName>
    </component>
</protein>
<name>CRLS1_SCHPO</name>
<keyword id="KW-0025">Alternative splicing</keyword>
<keyword id="KW-0378">Hydrolase</keyword>
<keyword id="KW-0444">Lipid biosynthesis</keyword>
<keyword id="KW-0443">Lipid metabolism</keyword>
<keyword id="KW-0472">Membrane</keyword>
<keyword id="KW-0496">Mitochondrion</keyword>
<keyword id="KW-0999">Mitochondrion inner membrane</keyword>
<keyword id="KW-0594">Phospholipid biosynthesis</keyword>
<keyword id="KW-1208">Phospholipid metabolism</keyword>
<keyword id="KW-1185">Reference proteome</keyword>
<keyword id="KW-0808">Transferase</keyword>
<keyword id="KW-0809">Transit peptide</keyword>
<keyword id="KW-0812">Transmembrane</keyword>
<keyword id="KW-1133">Transmembrane helix</keyword>
<sequence length="595" mass="66413">MLHTINYRSWHLAARQLGRSTFRKFTTESSTKSPIADVCFAFDSIDGVLIRGGRGLKEGTKTLKFLQKNNIPFILLTNGGGMHESVRAQRLSKTLSVSLTEDDFCQSHTPFRALADKYKHVLVLGGKDNSVRETAEKYGFKSVINELDVIAKLGTPFWPFTSFNEEDIKDAKDFDVTRPIEAVFTYVDPVRLGLDLQLVMELGQSKNGVLGTVSKTANEGPDIYFSNADLIWPNEYPLPRLGQGAFAICCESVFKELTGKDLRNTKYGKPHKLTYDYAKNILMKKHKTLGITNPPKEIFMVGDNPESDIRGANNYGWTSILVRTGIFQGDNSPKYSAKHVSDNVWEGVRWALSKHVPAAKLNKSMGEVRGFHTSSRVLNTVTKSNNSKPIQRPLRENIFTLPNLLTFSRLLSAPLIAYLYIYDYTKAAACFFLYAGFTDLVDGYIARKFDLGSIAGTVLDPLADKTLMTCLTICLAVRETMPLTLASLIIGRDVLLVSAVSYLRYKSLPAPKTFRRFFDFAIPTTELKPTRISKWNTALQLLLLGLLITEPILPFDASFAKSPLFYIVGCTTIASGASYCISRNTFRNIGKSKLQ</sequence>
<reference key="1">
    <citation type="journal article" date="2002" name="Nature">
        <title>The genome sequence of Schizosaccharomyces pombe.</title>
        <authorList>
            <person name="Wood V."/>
            <person name="Gwilliam R."/>
            <person name="Rajandream M.A."/>
            <person name="Lyne M.H."/>
            <person name="Lyne R."/>
            <person name="Stewart A."/>
            <person name="Sgouros J.G."/>
            <person name="Peat N."/>
            <person name="Hayles J."/>
            <person name="Baker S.G."/>
            <person name="Basham D."/>
            <person name="Bowman S."/>
            <person name="Brooks K."/>
            <person name="Brown D."/>
            <person name="Brown S."/>
            <person name="Chillingworth T."/>
            <person name="Churcher C.M."/>
            <person name="Collins M."/>
            <person name="Connor R."/>
            <person name="Cronin A."/>
            <person name="Davis P."/>
            <person name="Feltwell T."/>
            <person name="Fraser A."/>
            <person name="Gentles S."/>
            <person name="Goble A."/>
            <person name="Hamlin N."/>
            <person name="Harris D.E."/>
            <person name="Hidalgo J."/>
            <person name="Hodgson G."/>
            <person name="Holroyd S."/>
            <person name="Hornsby T."/>
            <person name="Howarth S."/>
            <person name="Huckle E.J."/>
            <person name="Hunt S."/>
            <person name="Jagels K."/>
            <person name="James K.D."/>
            <person name="Jones L."/>
            <person name="Jones M."/>
            <person name="Leather S."/>
            <person name="McDonald S."/>
            <person name="McLean J."/>
            <person name="Mooney P."/>
            <person name="Moule S."/>
            <person name="Mungall K.L."/>
            <person name="Murphy L.D."/>
            <person name="Niblett D."/>
            <person name="Odell C."/>
            <person name="Oliver K."/>
            <person name="O'Neil S."/>
            <person name="Pearson D."/>
            <person name="Quail M.A."/>
            <person name="Rabbinowitsch E."/>
            <person name="Rutherford K.M."/>
            <person name="Rutter S."/>
            <person name="Saunders D."/>
            <person name="Seeger K."/>
            <person name="Sharp S."/>
            <person name="Skelton J."/>
            <person name="Simmonds M.N."/>
            <person name="Squares R."/>
            <person name="Squares S."/>
            <person name="Stevens K."/>
            <person name="Taylor K."/>
            <person name="Taylor R.G."/>
            <person name="Tivey A."/>
            <person name="Walsh S.V."/>
            <person name="Warren T."/>
            <person name="Whitehead S."/>
            <person name="Woodward J.R."/>
            <person name="Volckaert G."/>
            <person name="Aert R."/>
            <person name="Robben J."/>
            <person name="Grymonprez B."/>
            <person name="Weltjens I."/>
            <person name="Vanstreels E."/>
            <person name="Rieger M."/>
            <person name="Schaefer M."/>
            <person name="Mueller-Auer S."/>
            <person name="Gabel C."/>
            <person name="Fuchs M."/>
            <person name="Duesterhoeft A."/>
            <person name="Fritzc C."/>
            <person name="Holzer E."/>
            <person name="Moestl D."/>
            <person name="Hilbert H."/>
            <person name="Borzym K."/>
            <person name="Langer I."/>
            <person name="Beck A."/>
            <person name="Lehrach H."/>
            <person name="Reinhardt R."/>
            <person name="Pohl T.M."/>
            <person name="Eger P."/>
            <person name="Zimmermann W."/>
            <person name="Wedler H."/>
            <person name="Wambutt R."/>
            <person name="Purnelle B."/>
            <person name="Goffeau A."/>
            <person name="Cadieu E."/>
            <person name="Dreano S."/>
            <person name="Gloux S."/>
            <person name="Lelaure V."/>
            <person name="Mottier S."/>
            <person name="Galibert F."/>
            <person name="Aves S.J."/>
            <person name="Xiang Z."/>
            <person name="Hunt C."/>
            <person name="Moore K."/>
            <person name="Hurst S.M."/>
            <person name="Lucas M."/>
            <person name="Rochet M."/>
            <person name="Gaillardin C."/>
            <person name="Tallada V.A."/>
            <person name="Garzon A."/>
            <person name="Thode G."/>
            <person name="Daga R.R."/>
            <person name="Cruzado L."/>
            <person name="Jimenez J."/>
            <person name="Sanchez M."/>
            <person name="del Rey F."/>
            <person name="Benito J."/>
            <person name="Dominguez A."/>
            <person name="Revuelta J.L."/>
            <person name="Moreno S."/>
            <person name="Armstrong J."/>
            <person name="Forsburg S.L."/>
            <person name="Cerutti L."/>
            <person name="Lowe T."/>
            <person name="McCombie W.R."/>
            <person name="Paulsen I."/>
            <person name="Potashkin J."/>
            <person name="Shpakovski G.V."/>
            <person name="Ussery D."/>
            <person name="Barrell B.G."/>
            <person name="Nurse P."/>
        </authorList>
    </citation>
    <scope>NUCLEOTIDE SEQUENCE [LARGE SCALE GENOMIC DNA]</scope>
    <source>
        <strain>972 / ATCC 24843</strain>
    </source>
</reference>
<reference key="2">
    <citation type="journal article" date="2006" name="Nat. Biotechnol.">
        <title>ORFeome cloning and global analysis of protein localization in the fission yeast Schizosaccharomyces pombe.</title>
        <authorList>
            <person name="Matsuyama A."/>
            <person name="Arai R."/>
            <person name="Yashiroda Y."/>
            <person name="Shirai A."/>
            <person name="Kamata A."/>
            <person name="Sekido S."/>
            <person name="Kobayashi Y."/>
            <person name="Hashimoto A."/>
            <person name="Hamamoto M."/>
            <person name="Hiraoka Y."/>
            <person name="Horinouchi S."/>
            <person name="Yoshida M."/>
        </authorList>
    </citation>
    <scope>SUBCELLULAR LOCATION [LARGE SCALE ANALYSIS]</scope>
</reference>
<reference key="3">
    <citation type="journal article" date="2018" name="Biochim. Biophys. Acta">
        <title>Schizosaccharomyces pombe cardiolipin synthase is part of a mitochondrial fusion protein regulated by intron retention.</title>
        <authorList>
            <person name="Vircikova V."/>
            <person name="Pokorna L."/>
            <person name="Tahotna D."/>
            <person name="Dzugasova V."/>
            <person name="Balazova M."/>
            <person name="Griac P."/>
        </authorList>
    </citation>
    <scope>FUNCTION</scope>
    <scope>CATALYTIC ACTIVITY</scope>
    <scope>SUBCELLULAR LOCATION</scope>
    <scope>ALTERNATIVE SPLICING</scope>
    <scope>INDUCTION</scope>
    <scope>PROCESSING</scope>
    <scope>MUTAGENESIS OF 369-ARG--HIS-372</scope>
</reference>